<accession>B0R1D5</accession>
<proteinExistence type="evidence at transcript level"/>
<evidence type="ECO:0000250" key="1"/>
<evidence type="ECO:0000256" key="2">
    <source>
        <dbReference type="SAM" id="MobiDB-lite"/>
    </source>
</evidence>
<evidence type="ECO:0000305" key="3"/>
<name>SZ12B_DANRE</name>
<dbReference type="EMBL" id="AL954746">
    <property type="protein sequence ID" value="CAQ15133.1"/>
    <property type="molecule type" value="Genomic_DNA"/>
</dbReference>
<dbReference type="EMBL" id="BC163026">
    <property type="protein sequence ID" value="AAI63026.1"/>
    <property type="molecule type" value="mRNA"/>
</dbReference>
<dbReference type="RefSeq" id="NP_001076293.2">
    <property type="nucleotide sequence ID" value="NM_001082824.2"/>
</dbReference>
<dbReference type="SMR" id="B0R1D5"/>
<dbReference type="FunCoup" id="B0R1D5">
    <property type="interactions" value="2097"/>
</dbReference>
<dbReference type="STRING" id="7955.ENSDARP00000130332"/>
<dbReference type="PaxDb" id="7955-ENSDARP00000068241"/>
<dbReference type="PeptideAtlas" id="B0R1D5"/>
<dbReference type="Ensembl" id="ENSDART00000165271">
    <property type="protein sequence ID" value="ENSDARP00000130332"/>
    <property type="gene ID" value="ENSDARG00000098924"/>
</dbReference>
<dbReference type="GeneID" id="561871"/>
<dbReference type="KEGG" id="dre:561871"/>
<dbReference type="AGR" id="ZFIN:ZDB-GENE-030131-3255"/>
<dbReference type="CTD" id="561871"/>
<dbReference type="ZFIN" id="ZDB-GENE-030131-3255">
    <property type="gene designation" value="suz12b"/>
</dbReference>
<dbReference type="eggNOG" id="KOG2350">
    <property type="taxonomic scope" value="Eukaryota"/>
</dbReference>
<dbReference type="HOGENOM" id="CLU_014678_0_0_1"/>
<dbReference type="InParanoid" id="B0R1D5"/>
<dbReference type="OMA" id="VDGMLTK"/>
<dbReference type="OrthoDB" id="166746at2759"/>
<dbReference type="PhylomeDB" id="B0R1D5"/>
<dbReference type="TreeFam" id="TF323249"/>
<dbReference type="Reactome" id="R-DRE-212300">
    <property type="pathway name" value="PRC2 methylates histones and DNA"/>
</dbReference>
<dbReference type="Reactome" id="R-DRE-2559580">
    <property type="pathway name" value="Oxidative Stress Induced Senescence"/>
</dbReference>
<dbReference type="PRO" id="PR:B0R1D5"/>
<dbReference type="Proteomes" id="UP000000437">
    <property type="component" value="Alternate scaffold 6"/>
</dbReference>
<dbReference type="Proteomes" id="UP000000437">
    <property type="component" value="Chromosome 6"/>
</dbReference>
<dbReference type="Bgee" id="ENSDARG00000098924">
    <property type="expression patterns" value="Expressed in retina and 26 other cell types or tissues"/>
</dbReference>
<dbReference type="GO" id="GO:0035098">
    <property type="term" value="C:ESC/E(Z) complex"/>
    <property type="evidence" value="ECO:0000250"/>
    <property type="project" value="UniProtKB"/>
</dbReference>
<dbReference type="GO" id="GO:0005634">
    <property type="term" value="C:nucleus"/>
    <property type="evidence" value="ECO:0000318"/>
    <property type="project" value="GO_Central"/>
</dbReference>
<dbReference type="GO" id="GO:0016586">
    <property type="term" value="C:RSC-type complex"/>
    <property type="evidence" value="ECO:0000318"/>
    <property type="project" value="GO_Central"/>
</dbReference>
<dbReference type="GO" id="GO:0031490">
    <property type="term" value="F:chromatin DNA binding"/>
    <property type="evidence" value="ECO:0000318"/>
    <property type="project" value="GO_Central"/>
</dbReference>
<dbReference type="GO" id="GO:0008270">
    <property type="term" value="F:zinc ion binding"/>
    <property type="evidence" value="ECO:0007669"/>
    <property type="project" value="UniProtKB-KW"/>
</dbReference>
<dbReference type="GO" id="GO:0006325">
    <property type="term" value="P:chromatin organization"/>
    <property type="evidence" value="ECO:0007669"/>
    <property type="project" value="UniProtKB-KW"/>
</dbReference>
<dbReference type="CDD" id="cd21740">
    <property type="entry name" value="C2_II_SUZ12"/>
    <property type="match status" value="1"/>
</dbReference>
<dbReference type="CDD" id="cd21551">
    <property type="entry name" value="VEFS-box_SUZ12"/>
    <property type="match status" value="1"/>
</dbReference>
<dbReference type="CDD" id="cd21750">
    <property type="entry name" value="ZnB-Zn_SUZ12"/>
    <property type="match status" value="1"/>
</dbReference>
<dbReference type="InterPro" id="IPR019135">
    <property type="entry name" value="Polycomb_protein_VEFS-Box"/>
</dbReference>
<dbReference type="PANTHER" id="PTHR22597">
    <property type="entry name" value="POLYCOMB GROUP PROTEIN"/>
    <property type="match status" value="1"/>
</dbReference>
<dbReference type="PANTHER" id="PTHR22597:SF0">
    <property type="entry name" value="POLYCOMB PROTEIN SUZ12"/>
    <property type="match status" value="1"/>
</dbReference>
<dbReference type="Pfam" id="PF09733">
    <property type="entry name" value="VEFS-Box"/>
    <property type="match status" value="1"/>
</dbReference>
<dbReference type="Pfam" id="PF23320">
    <property type="entry name" value="Zn_SUZ12"/>
    <property type="match status" value="1"/>
</dbReference>
<dbReference type="PROSITE" id="PS00028">
    <property type="entry name" value="ZINC_FINGER_C2H2_1"/>
    <property type="match status" value="1"/>
</dbReference>
<feature type="chain" id="PRO_0000343751" description="Polycomb protein suz12-B">
    <location>
        <begin position="1"/>
        <end position="682"/>
    </location>
</feature>
<feature type="zinc finger region" description="C2H2-type">
    <location>
        <begin position="408"/>
        <end position="431"/>
    </location>
</feature>
<feature type="region of interest" description="Disordered" evidence="2">
    <location>
        <begin position="326"/>
        <end position="355"/>
    </location>
</feature>
<feature type="region of interest" description="VEFS-box">
    <location>
        <begin position="523"/>
        <end position="599"/>
    </location>
</feature>
<feature type="compositionally biased region" description="Polar residues" evidence="2">
    <location>
        <begin position="340"/>
        <end position="354"/>
    </location>
</feature>
<organism>
    <name type="scientific">Danio rerio</name>
    <name type="common">Zebrafish</name>
    <name type="synonym">Brachydanio rerio</name>
    <dbReference type="NCBI Taxonomy" id="7955"/>
    <lineage>
        <taxon>Eukaryota</taxon>
        <taxon>Metazoa</taxon>
        <taxon>Chordata</taxon>
        <taxon>Craniata</taxon>
        <taxon>Vertebrata</taxon>
        <taxon>Euteleostomi</taxon>
        <taxon>Actinopterygii</taxon>
        <taxon>Neopterygii</taxon>
        <taxon>Teleostei</taxon>
        <taxon>Ostariophysi</taxon>
        <taxon>Cypriniformes</taxon>
        <taxon>Danionidae</taxon>
        <taxon>Danioninae</taxon>
        <taxon>Danio</taxon>
    </lineage>
</organism>
<comment type="function">
    <text evidence="1">Polycomb group (PcG) protein. Component of the prc2/eed-ezh2 complex, which methylates 'Lys-9' and 'Lys-27' of histone H3, leading to transcriptional repression of the affected target gene (By similarity).</text>
</comment>
<comment type="subunit">
    <text evidence="1">Component of the prc2/eed-ezh2 complex.</text>
</comment>
<comment type="subcellular location">
    <subcellularLocation>
        <location evidence="1">Nucleus</location>
    </subcellularLocation>
</comment>
<comment type="similarity">
    <text evidence="3">Belongs to the VEFS (VRN2-EMF2-FIS2-SU(Z)12) family.</text>
</comment>
<gene>
    <name type="primary">suz12b</name>
    <name type="synonym">suz12</name>
    <name type="ORF">si:dkey-10p5.2</name>
</gene>
<reference key="1">
    <citation type="journal article" date="2013" name="Nature">
        <title>The zebrafish reference genome sequence and its relationship to the human genome.</title>
        <authorList>
            <person name="Howe K."/>
            <person name="Clark M.D."/>
            <person name="Torroja C.F."/>
            <person name="Torrance J."/>
            <person name="Berthelot C."/>
            <person name="Muffato M."/>
            <person name="Collins J.E."/>
            <person name="Humphray S."/>
            <person name="McLaren K."/>
            <person name="Matthews L."/>
            <person name="McLaren S."/>
            <person name="Sealy I."/>
            <person name="Caccamo M."/>
            <person name="Churcher C."/>
            <person name="Scott C."/>
            <person name="Barrett J.C."/>
            <person name="Koch R."/>
            <person name="Rauch G.J."/>
            <person name="White S."/>
            <person name="Chow W."/>
            <person name="Kilian B."/>
            <person name="Quintais L.T."/>
            <person name="Guerra-Assuncao J.A."/>
            <person name="Zhou Y."/>
            <person name="Gu Y."/>
            <person name="Yen J."/>
            <person name="Vogel J.H."/>
            <person name="Eyre T."/>
            <person name="Redmond S."/>
            <person name="Banerjee R."/>
            <person name="Chi J."/>
            <person name="Fu B."/>
            <person name="Langley E."/>
            <person name="Maguire S.F."/>
            <person name="Laird G.K."/>
            <person name="Lloyd D."/>
            <person name="Kenyon E."/>
            <person name="Donaldson S."/>
            <person name="Sehra H."/>
            <person name="Almeida-King J."/>
            <person name="Loveland J."/>
            <person name="Trevanion S."/>
            <person name="Jones M."/>
            <person name="Quail M."/>
            <person name="Willey D."/>
            <person name="Hunt A."/>
            <person name="Burton J."/>
            <person name="Sims S."/>
            <person name="McLay K."/>
            <person name="Plumb B."/>
            <person name="Davis J."/>
            <person name="Clee C."/>
            <person name="Oliver K."/>
            <person name="Clark R."/>
            <person name="Riddle C."/>
            <person name="Elliot D."/>
            <person name="Threadgold G."/>
            <person name="Harden G."/>
            <person name="Ware D."/>
            <person name="Begum S."/>
            <person name="Mortimore B."/>
            <person name="Kerry G."/>
            <person name="Heath P."/>
            <person name="Phillimore B."/>
            <person name="Tracey A."/>
            <person name="Corby N."/>
            <person name="Dunn M."/>
            <person name="Johnson C."/>
            <person name="Wood J."/>
            <person name="Clark S."/>
            <person name="Pelan S."/>
            <person name="Griffiths G."/>
            <person name="Smith M."/>
            <person name="Glithero R."/>
            <person name="Howden P."/>
            <person name="Barker N."/>
            <person name="Lloyd C."/>
            <person name="Stevens C."/>
            <person name="Harley J."/>
            <person name="Holt K."/>
            <person name="Panagiotidis G."/>
            <person name="Lovell J."/>
            <person name="Beasley H."/>
            <person name="Henderson C."/>
            <person name="Gordon D."/>
            <person name="Auger K."/>
            <person name="Wright D."/>
            <person name="Collins J."/>
            <person name="Raisen C."/>
            <person name="Dyer L."/>
            <person name="Leung K."/>
            <person name="Robertson L."/>
            <person name="Ambridge K."/>
            <person name="Leongamornlert D."/>
            <person name="McGuire S."/>
            <person name="Gilderthorp R."/>
            <person name="Griffiths C."/>
            <person name="Manthravadi D."/>
            <person name="Nichol S."/>
            <person name="Barker G."/>
            <person name="Whitehead S."/>
            <person name="Kay M."/>
            <person name="Brown J."/>
            <person name="Murnane C."/>
            <person name="Gray E."/>
            <person name="Humphries M."/>
            <person name="Sycamore N."/>
            <person name="Barker D."/>
            <person name="Saunders D."/>
            <person name="Wallis J."/>
            <person name="Babbage A."/>
            <person name="Hammond S."/>
            <person name="Mashreghi-Mohammadi M."/>
            <person name="Barr L."/>
            <person name="Martin S."/>
            <person name="Wray P."/>
            <person name="Ellington A."/>
            <person name="Matthews N."/>
            <person name="Ellwood M."/>
            <person name="Woodmansey R."/>
            <person name="Clark G."/>
            <person name="Cooper J."/>
            <person name="Tromans A."/>
            <person name="Grafham D."/>
            <person name="Skuce C."/>
            <person name="Pandian R."/>
            <person name="Andrews R."/>
            <person name="Harrison E."/>
            <person name="Kimberley A."/>
            <person name="Garnett J."/>
            <person name="Fosker N."/>
            <person name="Hall R."/>
            <person name="Garner P."/>
            <person name="Kelly D."/>
            <person name="Bird C."/>
            <person name="Palmer S."/>
            <person name="Gehring I."/>
            <person name="Berger A."/>
            <person name="Dooley C.M."/>
            <person name="Ersan-Urun Z."/>
            <person name="Eser C."/>
            <person name="Geiger H."/>
            <person name="Geisler M."/>
            <person name="Karotki L."/>
            <person name="Kirn A."/>
            <person name="Konantz J."/>
            <person name="Konantz M."/>
            <person name="Oberlander M."/>
            <person name="Rudolph-Geiger S."/>
            <person name="Teucke M."/>
            <person name="Lanz C."/>
            <person name="Raddatz G."/>
            <person name="Osoegawa K."/>
            <person name="Zhu B."/>
            <person name="Rapp A."/>
            <person name="Widaa S."/>
            <person name="Langford C."/>
            <person name="Yang F."/>
            <person name="Schuster S.C."/>
            <person name="Carter N.P."/>
            <person name="Harrow J."/>
            <person name="Ning Z."/>
            <person name="Herrero J."/>
            <person name="Searle S.M."/>
            <person name="Enright A."/>
            <person name="Geisler R."/>
            <person name="Plasterk R.H."/>
            <person name="Lee C."/>
            <person name="Westerfield M."/>
            <person name="de Jong P.J."/>
            <person name="Zon L.I."/>
            <person name="Postlethwait J.H."/>
            <person name="Nusslein-Volhard C."/>
            <person name="Hubbard T.J."/>
            <person name="Roest Crollius H."/>
            <person name="Rogers J."/>
            <person name="Stemple D.L."/>
        </authorList>
    </citation>
    <scope>NUCLEOTIDE SEQUENCE [LARGE SCALE GENOMIC DNA]</scope>
    <source>
        <strain>Tuebingen</strain>
    </source>
</reference>
<reference key="2">
    <citation type="submission" date="2008-06" db="EMBL/GenBank/DDBJ databases">
        <authorList>
            <consortium name="NIH - Zebrafish Gene Collection (ZGC) project"/>
        </authorList>
    </citation>
    <scope>NUCLEOTIDE SEQUENCE [LARGE SCALE MRNA]</scope>
</reference>
<keyword id="KW-0156">Chromatin regulator</keyword>
<keyword id="KW-0479">Metal-binding</keyword>
<keyword id="KW-0539">Nucleus</keyword>
<keyword id="KW-1185">Reference proteome</keyword>
<keyword id="KW-0678">Repressor</keyword>
<keyword id="KW-0804">Transcription</keyword>
<keyword id="KW-0805">Transcription regulation</keyword>
<keyword id="KW-0862">Zinc</keyword>
<keyword id="KW-0863">Zinc-finger</keyword>
<protein>
    <recommendedName>
        <fullName>Polycomb protein suz12-B</fullName>
    </recommendedName>
    <alternativeName>
        <fullName>Suppressor of zeste 12 protein homolog B</fullName>
    </alternativeName>
</protein>
<sequence>MAPQKYSAQVMNSKANGAVYPSSGVSSLKKPKIEQLQADHELFLQAFEKPTQIYRFLRTRNLITPVLLHRTLTFMSHRNSRTNAKRKSFKVDDLLSSVEKMKGEPESPSLTSHLQLTFTGFFHKNVKPCQNSENEQNSVSLEVLLVKVCHKKRKDVSCPIKQVPTGKKQVPLNPDLSQTKPGAFPSLLVSSNEFEPSNSHMVKSYSLLFRVSHTGKRDPNGFISCEADENIDVKDEIPPRRKRNSSLRGDGETTETFVAQMTVFDKNRRLQLLDGEYEVSMQQIEDCPVSKKRATWETILDGKRLPPFETFSQGPTLQFTLRWTADPSDPSTAPVAKPLSTRNSDTSTTESRISTLRPAPVAVKESVSTSMQSRIEHSPCEPRQKLRIFYQFLYNNNTRQQTEARDDLHCPWCTLNCRKLYSLLKHLKLSHSRFIFNYVPHPKGARIDVSINECYDGSYVGNPQDIHSQPGFAFSRNGPVKRTAVTHILVCRPKRTKPSLSEFLESEDGEPEQQRTYVSGHNRLYFHSDSCMPLRPQEMEVDSEDERDPEWLQEKTTTQIEEFTDVNEGEKEVMKLWNLHVMKNGFIADNQMSQASMLFVEICGPHIIRRNLCRNFLLHLVNLHDFNLVTIATIDQAMARLKEIEESFPELEAGQESLDATCNGHSLSLGFSLHGKCTKLES</sequence>